<keyword id="KW-0649">Protein kinase inhibitor</keyword>
<keyword id="KW-1185">Reference proteome</keyword>
<dbReference type="EMBL" id="AP005891">
    <property type="protein sequence ID" value="BAD38390.1"/>
    <property type="molecule type" value="Genomic_DNA"/>
</dbReference>
<dbReference type="EMBL" id="AP006849">
    <property type="protein sequence ID" value="BAD38526.1"/>
    <property type="molecule type" value="Genomic_DNA"/>
</dbReference>
<dbReference type="EMBL" id="AP008215">
    <property type="protein sequence ID" value="BAF25298.1"/>
    <property type="molecule type" value="Genomic_DNA"/>
</dbReference>
<dbReference type="EMBL" id="AP014965">
    <property type="protein sequence ID" value="BAT08469.1"/>
    <property type="molecule type" value="Genomic_DNA"/>
</dbReference>
<dbReference type="EMBL" id="AK063208">
    <property type="status" value="NOT_ANNOTATED_CDS"/>
    <property type="molecule type" value="mRNA"/>
</dbReference>
<dbReference type="RefSeq" id="XP_015611321.1">
    <property type="nucleotide sequence ID" value="XM_015755835.1"/>
</dbReference>
<dbReference type="SMR" id="Q67J15"/>
<dbReference type="FunCoup" id="Q67J15">
    <property type="interactions" value="19"/>
</dbReference>
<dbReference type="STRING" id="39947.Q67J15"/>
<dbReference type="PaxDb" id="39947-Q67J15"/>
<dbReference type="EnsemblPlants" id="Os09t0459900-02">
    <property type="protein sequence ID" value="Os09t0459900-02"/>
    <property type="gene ID" value="Os09g0459900"/>
</dbReference>
<dbReference type="Gramene" id="Os09t0459900-02">
    <property type="protein sequence ID" value="Os09t0459900-02"/>
    <property type="gene ID" value="Os09g0459900"/>
</dbReference>
<dbReference type="KEGG" id="dosa:Os09g0459900"/>
<dbReference type="HOGENOM" id="CLU_175089_0_0_1"/>
<dbReference type="InParanoid" id="Q67J15"/>
<dbReference type="OMA" id="VVPRCSK"/>
<dbReference type="PlantReactome" id="R-OSA-9640760">
    <property type="pathway name" value="G1 phase"/>
</dbReference>
<dbReference type="Proteomes" id="UP000000763">
    <property type="component" value="Chromosome 9"/>
</dbReference>
<dbReference type="Proteomes" id="UP000059680">
    <property type="component" value="Chromosome 9"/>
</dbReference>
<dbReference type="ExpressionAtlas" id="Q67J15">
    <property type="expression patterns" value="baseline and differential"/>
</dbReference>
<dbReference type="GO" id="GO:0005634">
    <property type="term" value="C:nucleus"/>
    <property type="evidence" value="ECO:0007669"/>
    <property type="project" value="InterPro"/>
</dbReference>
<dbReference type="GO" id="GO:0004861">
    <property type="term" value="F:cyclin-dependent protein serine/threonine kinase inhibitor activity"/>
    <property type="evidence" value="ECO:0007669"/>
    <property type="project" value="InterPro"/>
</dbReference>
<dbReference type="GO" id="GO:0051726">
    <property type="term" value="P:regulation of cell cycle"/>
    <property type="evidence" value="ECO:0007669"/>
    <property type="project" value="InterPro"/>
</dbReference>
<dbReference type="Gene3D" id="4.10.365.10">
    <property type="entry name" value="p27"/>
    <property type="match status" value="1"/>
</dbReference>
<dbReference type="InterPro" id="IPR003175">
    <property type="entry name" value="CDI_dom"/>
</dbReference>
<dbReference type="InterPro" id="IPR044898">
    <property type="entry name" value="CDI_dom_sf"/>
</dbReference>
<dbReference type="InterPro" id="IPR044275">
    <property type="entry name" value="KRP"/>
</dbReference>
<dbReference type="PANTHER" id="PTHR46776">
    <property type="entry name" value="CYCLIN-DEPENDENT KINASE INHIBITOR 4-RELATED"/>
    <property type="match status" value="1"/>
</dbReference>
<dbReference type="Pfam" id="PF02234">
    <property type="entry name" value="CDI"/>
    <property type="match status" value="1"/>
</dbReference>
<proteinExistence type="inferred from homology"/>
<name>KRP6_ORYSJ</name>
<organism>
    <name type="scientific">Oryza sativa subsp. japonica</name>
    <name type="common">Rice</name>
    <dbReference type="NCBI Taxonomy" id="39947"/>
    <lineage>
        <taxon>Eukaryota</taxon>
        <taxon>Viridiplantae</taxon>
        <taxon>Streptophyta</taxon>
        <taxon>Embryophyta</taxon>
        <taxon>Tracheophyta</taxon>
        <taxon>Spermatophyta</taxon>
        <taxon>Magnoliopsida</taxon>
        <taxon>Liliopsida</taxon>
        <taxon>Poales</taxon>
        <taxon>Poaceae</taxon>
        <taxon>BOP clade</taxon>
        <taxon>Oryzoideae</taxon>
        <taxon>Oryzeae</taxon>
        <taxon>Oryzinae</taxon>
        <taxon>Oryza</taxon>
        <taxon>Oryza sativa</taxon>
    </lineage>
</organism>
<comment type="similarity">
    <text evidence="2">Belongs to the CDI family. ICK/KRP subfamily.</text>
</comment>
<comment type="caution">
    <text evidence="2">In contrast to other members of the family, it lacks the N-terminal region.</text>
</comment>
<evidence type="ECO:0000256" key="1">
    <source>
        <dbReference type="SAM" id="MobiDB-lite"/>
    </source>
</evidence>
<evidence type="ECO:0000305" key="2"/>
<feature type="chain" id="PRO_0000295669" description="Cyclin-dependent kinase inhibitor 6">
    <location>
        <begin position="1"/>
        <end position="86"/>
    </location>
</feature>
<feature type="region of interest" description="Disordered" evidence="1">
    <location>
        <begin position="1"/>
        <end position="23"/>
    </location>
</feature>
<feature type="compositionally biased region" description="Low complexity" evidence="1">
    <location>
        <begin position="1"/>
        <end position="15"/>
    </location>
</feature>
<sequence length="86" mass="9275">MAAAAATVTAVQPAASSCGKRDGDNACVVDMPRKAKKGRSPPEEEVEAFLAAAESSVARRFAAKYNYDIVKDAPMDGRYEWVRVRP</sequence>
<protein>
    <recommendedName>
        <fullName>Cyclin-dependent kinase inhibitor 6</fullName>
    </recommendedName>
    <alternativeName>
        <fullName>KIP-related protein 6</fullName>
    </alternativeName>
</protein>
<reference key="1">
    <citation type="journal article" date="2005" name="Nature">
        <title>The map-based sequence of the rice genome.</title>
        <authorList>
            <consortium name="International rice genome sequencing project (IRGSP)"/>
        </authorList>
    </citation>
    <scope>NUCLEOTIDE SEQUENCE [LARGE SCALE GENOMIC DNA]</scope>
    <source>
        <strain>cv. Nipponbare</strain>
    </source>
</reference>
<reference key="2">
    <citation type="journal article" date="2008" name="Nucleic Acids Res.">
        <title>The rice annotation project database (RAP-DB): 2008 update.</title>
        <authorList>
            <consortium name="The rice annotation project (RAP)"/>
        </authorList>
    </citation>
    <scope>GENOME REANNOTATION</scope>
    <source>
        <strain>cv. Nipponbare</strain>
    </source>
</reference>
<reference key="3">
    <citation type="journal article" date="2013" name="Rice">
        <title>Improvement of the Oryza sativa Nipponbare reference genome using next generation sequence and optical map data.</title>
        <authorList>
            <person name="Kawahara Y."/>
            <person name="de la Bastide M."/>
            <person name="Hamilton J.P."/>
            <person name="Kanamori H."/>
            <person name="McCombie W.R."/>
            <person name="Ouyang S."/>
            <person name="Schwartz D.C."/>
            <person name="Tanaka T."/>
            <person name="Wu J."/>
            <person name="Zhou S."/>
            <person name="Childs K.L."/>
            <person name="Davidson R.M."/>
            <person name="Lin H."/>
            <person name="Quesada-Ocampo L."/>
            <person name="Vaillancourt B."/>
            <person name="Sakai H."/>
            <person name="Lee S.S."/>
            <person name="Kim J."/>
            <person name="Numa H."/>
            <person name="Itoh T."/>
            <person name="Buell C.R."/>
            <person name="Matsumoto T."/>
        </authorList>
    </citation>
    <scope>GENOME REANNOTATION</scope>
    <source>
        <strain>cv. Nipponbare</strain>
    </source>
</reference>
<reference key="4">
    <citation type="journal article" date="2003" name="Science">
        <title>Collection, mapping, and annotation of over 28,000 cDNA clones from japonica rice.</title>
        <authorList>
            <consortium name="The rice full-length cDNA consortium"/>
        </authorList>
    </citation>
    <scope>NUCLEOTIDE SEQUENCE [LARGE SCALE MRNA]</scope>
    <source>
        <strain>cv. Nipponbare</strain>
    </source>
</reference>
<gene>
    <name type="primary">KRP6</name>
    <name type="ordered locus">Os09g0459900</name>
    <name type="ordered locus">LOC_Os09g28580</name>
    <name type="ORF">B1045B05.40-1</name>
    <name type="ORF">OSJNBa0054F02.18-1</name>
</gene>
<accession>Q67J15</accession>